<organismHost>
    <name type="scientific">Homo sapiens</name>
    <name type="common">Human</name>
    <dbReference type="NCBI Taxonomy" id="9606"/>
</organismHost>
<sequence length="525" mass="58418">MATLLRSLALFKRNKDKPPITSGSGGAIRGIKHIIIVPIPGDSSITTRSRLLDRLVRLIGNPDVSGPKLTGALIGILSLFVESPGQLIQRITDDPDVSIRLLEVVQSDQSQSGLTFASRGTNMEDEADQYFSHDDPSSSDQPRFGWFENKEISDIEVQDPEGFNMILGTILAQIWVLLAKAVTAPDTAADSELRRWIKYTQQRRVVGEFRLERKWLDVVRNRIAEDLSLRRFMVALIQDIKRTPGNKPRIAEMICDIDTYIVEAGLASFILTIKFGIETMYPALGLHEFAGELSTLESLMNLYQQMGETAPYMVILENSIQNKFSAGSYPLLWSYAMGVGVELENSMGGLNFGRSYFDPAYFRLGQEMVRRSAGKVSSTLASELGITAEDARLVSEIAMHTTEDRISRAVGPRQAQVSFLHGDQSENELPRWEGKEDMRVKQSRGEARESYRETGPSRASDARAAHLPTDTPLDIDTASEPSQDPQDSRRSAEALLRLQAMAGISEEQGSDTDTPRVYNDRDLLE</sequence>
<accession>P26030</accession>
<protein>
    <recommendedName>
        <fullName>Nucleoprotein</fullName>
    </recommendedName>
    <alternativeName>
        <fullName>Nucleocapsid protein</fullName>
        <shortName>NP</shortName>
        <shortName>Protein N</shortName>
    </alternativeName>
</protein>
<feature type="chain" id="PRO_0000142659" description="Nucleoprotein">
    <location>
        <begin position="1"/>
        <end position="525"/>
    </location>
</feature>
<feature type="region of interest" description="Ncore" evidence="3">
    <location>
        <begin position="1"/>
        <end position="403"/>
    </location>
</feature>
<feature type="region of interest" description="RNA packaging and organization of the helical nucleocapsid" evidence="8">
    <location>
        <begin position="1"/>
        <end position="375"/>
    </location>
</feature>
<feature type="region of interest" description="Homomultimerization" evidence="5">
    <location>
        <begin position="1"/>
        <end position="36"/>
    </location>
</feature>
<feature type="region of interest" description="Homomultimerization" evidence="5">
    <location>
        <begin position="373"/>
        <end position="391"/>
    </location>
</feature>
<feature type="region of interest" description="Ntail" evidence="3">
    <location>
        <begin position="404"/>
        <end position="525"/>
    </location>
</feature>
<feature type="region of interest" description="Disordered" evidence="10">
    <location>
        <begin position="418"/>
        <end position="525"/>
    </location>
</feature>
<feature type="region of interest" description="Interaction with the phosphoprotein" evidence="7">
    <location>
        <begin position="477"/>
        <end position="505"/>
    </location>
</feature>
<feature type="short sequence motif" description="Nuclear localization signal" evidence="2">
    <location>
        <begin position="70"/>
        <end position="77"/>
    </location>
</feature>
<feature type="short sequence motif" description="Nuclear export signal" evidence="2">
    <location>
        <begin position="425"/>
        <end position="440"/>
    </location>
</feature>
<feature type="compositionally biased region" description="Basic and acidic residues" evidence="10">
    <location>
        <begin position="428"/>
        <end position="452"/>
    </location>
</feature>
<feature type="binding site" evidence="7">
    <location>
        <position position="180"/>
    </location>
    <ligand>
        <name>RNA</name>
        <dbReference type="ChEBI" id="CHEBI:33697"/>
    </ligand>
</feature>
<feature type="binding site" evidence="7">
    <location>
        <position position="195"/>
    </location>
    <ligand>
        <name>RNA</name>
        <dbReference type="ChEBI" id="CHEBI:33697"/>
    </ligand>
</feature>
<feature type="binding site" evidence="7">
    <location>
        <position position="202"/>
    </location>
    <ligand>
        <name>RNA</name>
        <dbReference type="ChEBI" id="CHEBI:33697"/>
    </ligand>
</feature>
<feature type="binding site" evidence="7">
    <location>
        <position position="260"/>
    </location>
    <ligand>
        <name>RNA</name>
        <dbReference type="ChEBI" id="CHEBI:33697"/>
    </ligand>
</feature>
<feature type="binding site" evidence="7">
    <location>
        <position position="351"/>
    </location>
    <ligand>
        <name>RNA</name>
        <dbReference type="ChEBI" id="CHEBI:33697"/>
    </ligand>
</feature>
<feature type="modified residue" description="Phosphothreonine; by host" evidence="9">
    <location>
        <position position="279"/>
    </location>
</feature>
<proteinExistence type="evidence at transcript level"/>
<evidence type="ECO:0000250" key="1">
    <source>
        <dbReference type="UniProtKB" id="O57286"/>
    </source>
</evidence>
<evidence type="ECO:0000250" key="2">
    <source>
        <dbReference type="UniProtKB" id="P04851"/>
    </source>
</evidence>
<evidence type="ECO:0000250" key="3">
    <source>
        <dbReference type="UniProtKB" id="P06159"/>
    </source>
</evidence>
<evidence type="ECO:0000250" key="4">
    <source>
        <dbReference type="UniProtKB" id="P0DXN6"/>
    </source>
</evidence>
<evidence type="ECO:0000250" key="5">
    <source>
        <dbReference type="UniProtKB" id="P10050"/>
    </source>
</evidence>
<evidence type="ECO:0000250" key="6">
    <source>
        <dbReference type="UniProtKB" id="Q07097"/>
    </source>
</evidence>
<evidence type="ECO:0000250" key="7">
    <source>
        <dbReference type="UniProtKB" id="Q77M43"/>
    </source>
</evidence>
<evidence type="ECO:0000250" key="8">
    <source>
        <dbReference type="UniProtKB" id="Q89933"/>
    </source>
</evidence>
<evidence type="ECO:0000250" key="9">
    <source>
        <dbReference type="UniProtKB" id="Q9WMB5"/>
    </source>
</evidence>
<evidence type="ECO:0000256" key="10">
    <source>
        <dbReference type="SAM" id="MobiDB-lite"/>
    </source>
</evidence>
<evidence type="ECO:0000305" key="11"/>
<dbReference type="EMBL" id="D10550">
    <property type="protein sequence ID" value="BAA01407.1"/>
    <property type="molecule type" value="mRNA"/>
</dbReference>
<dbReference type="SMR" id="P26030"/>
<dbReference type="GO" id="GO:0019029">
    <property type="term" value="C:helical viral capsid"/>
    <property type="evidence" value="ECO:0007669"/>
    <property type="project" value="UniProtKB-KW"/>
</dbReference>
<dbReference type="GO" id="GO:0030430">
    <property type="term" value="C:host cell cytoplasm"/>
    <property type="evidence" value="ECO:0007669"/>
    <property type="project" value="UniProtKB-SubCell"/>
</dbReference>
<dbReference type="GO" id="GO:0042025">
    <property type="term" value="C:host cell nucleus"/>
    <property type="evidence" value="ECO:0007669"/>
    <property type="project" value="UniProtKB-SubCell"/>
</dbReference>
<dbReference type="GO" id="GO:1990904">
    <property type="term" value="C:ribonucleoprotein complex"/>
    <property type="evidence" value="ECO:0007669"/>
    <property type="project" value="UniProtKB-KW"/>
</dbReference>
<dbReference type="GO" id="GO:0019013">
    <property type="term" value="C:viral nucleocapsid"/>
    <property type="evidence" value="ECO:0007669"/>
    <property type="project" value="UniProtKB-KW"/>
</dbReference>
<dbReference type="GO" id="GO:0003723">
    <property type="term" value="F:RNA binding"/>
    <property type="evidence" value="ECO:0007669"/>
    <property type="project" value="UniProtKB-KW"/>
</dbReference>
<dbReference type="GO" id="GO:0005198">
    <property type="term" value="F:structural molecule activity"/>
    <property type="evidence" value="ECO:0007669"/>
    <property type="project" value="InterPro"/>
</dbReference>
<dbReference type="InterPro" id="IPR002021">
    <property type="entry name" value="Paramyx_ncap"/>
</dbReference>
<dbReference type="Pfam" id="PF00973">
    <property type="entry name" value="Paramyxo_ncap"/>
    <property type="match status" value="1"/>
</dbReference>
<keyword id="KW-0167">Capsid protein</keyword>
<keyword id="KW-1139">Helical capsid protein</keyword>
<keyword id="KW-1035">Host cytoplasm</keyword>
<keyword id="KW-1048">Host nucleus</keyword>
<keyword id="KW-0945">Host-virus interaction</keyword>
<keyword id="KW-0597">Phosphoprotein</keyword>
<keyword id="KW-0687">Ribonucleoprotein</keyword>
<keyword id="KW-0694">RNA-binding</keyword>
<keyword id="KW-0543">Viral nucleoprotein</keyword>
<keyword id="KW-0946">Virion</keyword>
<name>NCAP_MEASY</name>
<reference key="1">
    <citation type="journal article" date="1990" name="Virus Genes">
        <title>Molecular analysis of structural protein genes of the Yamagata-1 strain of defective subacute sclerosing panencephalitis virus. I. Nucleotide sequence of the nucleoprotein gene.</title>
        <authorList>
            <person name="Komase K."/>
            <person name="Kasaoka T."/>
            <person name="Yoshikawa Y."/>
            <person name="Sato T.A."/>
            <person name="Yamanouchi K."/>
        </authorList>
    </citation>
    <scope>NUCLEOTIDE SEQUENCE [MRNA]</scope>
</reference>
<gene>
    <name type="primary">N</name>
    <name type="synonym">NP</name>
</gene>
<comment type="function">
    <text evidence="3 4 5 9">Forms the helical nucleocapsid (NC) in a ratio of 1 N per 6 ribonucleotides, protecting the genome from nucleases (By similarity). The nucleocapsid (NC) has a helical structure with either 12.35 or 11.64 N per turn, approximately 20 nm in diameter, with a hollow central cavity approximately 5 nm in diameter (By similarity). The encapsidated genomic RNA serves as template for transcription and replication; encapsidation by N is coupled to RNA synthesis (By similarity). Forms the encapsidation complex with the phosphoprotein protein P (By similarity). Before encapsidation, the newly synthesized free N protein, so-called N0, is chaperoned by P (By similarity). Participates, together with P, in the formation of viral factories (viroplasms), which are large inclusions in the host cytoplasm where replication takes place (By similarity). N is released in the blood following lysis of measles infected cells, it interacts then with human FCGR2B on immune cells, inducing apoptosis and blocking inflammatory immune response (By similarity).</text>
</comment>
<comment type="subunit">
    <text evidence="1 3 4 6 7 8 9">Homomultimer; forms the nucleocapsid (By similarity). Binds to viral genomic RNA (By similarity). N0 interacts (via Ncore) with the phosphoprotein (via N-terminus); this interaction allows P to chaperon N0 to avoid N polymerization and non-specific RNA binding before encapsidation (By similarity). Interacts (via the Ntail) as N-RNA template with the phosphoprotein (via C-terminus XD); this interaction maintains the P/L complex anchored to the nucleocapsid template during the sequential transcription (By similarity). Interacts with the phosphoprotein; this interaction leads to the formation of membraneless organelles that function as viral replication factories (By similarity). Interacts with human FCGR2B protein (By similarity). Interacts with human PPIA/CYPA and PPIB/CYPB (By similarity).</text>
</comment>
<comment type="subcellular location">
    <subcellularLocation>
        <location evidence="2">Virion</location>
    </subcellularLocation>
    <subcellularLocation>
        <location evidence="2">Host cytoplasm</location>
    </subcellularLocation>
    <subcellularLocation>
        <location evidence="2">Host nucleus</location>
    </subcellularLocation>
</comment>
<comment type="domain">
    <text evidence="8">Ncore is globular and carries regions required for N self-assembly and RNA-binding. Ntail is an intrinsically disordered monomeric domain in the C-terminus.</text>
</comment>
<comment type="PTM">
    <text evidence="9">Phosphorylation at Thr-279 is required for the formation of the nucleocapsid.</text>
</comment>
<comment type="similarity">
    <text evidence="11">Belongs to the paramyxoviruses nucleocapsid family.</text>
</comment>
<organism>
    <name type="scientific">Measles virus (strain Yamagata-1)</name>
    <name type="common">MeV</name>
    <name type="synonym">Subacute sclerose panencephalitis virus</name>
    <dbReference type="NCBI Taxonomy" id="11239"/>
    <lineage>
        <taxon>Viruses</taxon>
        <taxon>Riboviria</taxon>
        <taxon>Orthornavirae</taxon>
        <taxon>Negarnaviricota</taxon>
        <taxon>Haploviricotina</taxon>
        <taxon>Monjiviricetes</taxon>
        <taxon>Mononegavirales</taxon>
        <taxon>Paramyxoviridae</taxon>
        <taxon>Orthoparamyxovirinae</taxon>
        <taxon>Morbillivirus</taxon>
        <taxon>Morbillivirus hominis</taxon>
        <taxon>Measles morbillivirus</taxon>
    </lineage>
</organism>